<reference key="1">
    <citation type="journal article" date="2000" name="Eur. J. Biochem.">
        <title>Polypeptides differentially expressed in imaginal discs define the peroxiredoxin family of genes in Drosophila.</title>
        <authorList>
            <person name="Rodriguez J."/>
            <person name="Agudo M."/>
            <person name="Van Damme J."/>
            <person name="Vandekerckhove J."/>
            <person name="Santaren J.F."/>
        </authorList>
    </citation>
    <scope>NUCLEOTIDE SEQUENCE [MRNA]</scope>
</reference>
<reference key="2">
    <citation type="journal article" date="2001" name="Free Radic. Biol. Med.">
        <title>The peroxiredoxin gene family in Drosophila melanogaster.</title>
        <authorList>
            <person name="Radyuk S.N."/>
            <person name="Klichko V.I."/>
            <person name="Spinola B."/>
            <person name="Sohal R.S."/>
            <person name="Orr W.C."/>
        </authorList>
    </citation>
    <scope>NUCLEOTIDE SEQUENCE [MRNA]</scope>
    <scope>CATALYTIC ACTIVITY</scope>
    <scope>SUBCELLULAR LOCATION</scope>
    <scope>DEVELOPMENTAL STAGE</scope>
</reference>
<reference key="3">
    <citation type="journal article" date="2000" name="Science">
        <title>The genome sequence of Drosophila melanogaster.</title>
        <authorList>
            <person name="Adams M.D."/>
            <person name="Celniker S.E."/>
            <person name="Holt R.A."/>
            <person name="Evans C.A."/>
            <person name="Gocayne J.D."/>
            <person name="Amanatides P.G."/>
            <person name="Scherer S.E."/>
            <person name="Li P.W."/>
            <person name="Hoskins R.A."/>
            <person name="Galle R.F."/>
            <person name="George R.A."/>
            <person name="Lewis S.E."/>
            <person name="Richards S."/>
            <person name="Ashburner M."/>
            <person name="Henderson S.N."/>
            <person name="Sutton G.G."/>
            <person name="Wortman J.R."/>
            <person name="Yandell M.D."/>
            <person name="Zhang Q."/>
            <person name="Chen L.X."/>
            <person name="Brandon R.C."/>
            <person name="Rogers Y.-H.C."/>
            <person name="Blazej R.G."/>
            <person name="Champe M."/>
            <person name="Pfeiffer B.D."/>
            <person name="Wan K.H."/>
            <person name="Doyle C."/>
            <person name="Baxter E.G."/>
            <person name="Helt G."/>
            <person name="Nelson C.R."/>
            <person name="Miklos G.L.G."/>
            <person name="Abril J.F."/>
            <person name="Agbayani A."/>
            <person name="An H.-J."/>
            <person name="Andrews-Pfannkoch C."/>
            <person name="Baldwin D."/>
            <person name="Ballew R.M."/>
            <person name="Basu A."/>
            <person name="Baxendale J."/>
            <person name="Bayraktaroglu L."/>
            <person name="Beasley E.M."/>
            <person name="Beeson K.Y."/>
            <person name="Benos P.V."/>
            <person name="Berman B.P."/>
            <person name="Bhandari D."/>
            <person name="Bolshakov S."/>
            <person name="Borkova D."/>
            <person name="Botchan M.R."/>
            <person name="Bouck J."/>
            <person name="Brokstein P."/>
            <person name="Brottier P."/>
            <person name="Burtis K.C."/>
            <person name="Busam D.A."/>
            <person name="Butler H."/>
            <person name="Cadieu E."/>
            <person name="Center A."/>
            <person name="Chandra I."/>
            <person name="Cherry J.M."/>
            <person name="Cawley S."/>
            <person name="Dahlke C."/>
            <person name="Davenport L.B."/>
            <person name="Davies P."/>
            <person name="de Pablos B."/>
            <person name="Delcher A."/>
            <person name="Deng Z."/>
            <person name="Mays A.D."/>
            <person name="Dew I."/>
            <person name="Dietz S.M."/>
            <person name="Dodson K."/>
            <person name="Doup L.E."/>
            <person name="Downes M."/>
            <person name="Dugan-Rocha S."/>
            <person name="Dunkov B.C."/>
            <person name="Dunn P."/>
            <person name="Durbin K.J."/>
            <person name="Evangelista C.C."/>
            <person name="Ferraz C."/>
            <person name="Ferriera S."/>
            <person name="Fleischmann W."/>
            <person name="Fosler C."/>
            <person name="Gabrielian A.E."/>
            <person name="Garg N.S."/>
            <person name="Gelbart W.M."/>
            <person name="Glasser K."/>
            <person name="Glodek A."/>
            <person name="Gong F."/>
            <person name="Gorrell J.H."/>
            <person name="Gu Z."/>
            <person name="Guan P."/>
            <person name="Harris M."/>
            <person name="Harris N.L."/>
            <person name="Harvey D.A."/>
            <person name="Heiman T.J."/>
            <person name="Hernandez J.R."/>
            <person name="Houck J."/>
            <person name="Hostin D."/>
            <person name="Houston K.A."/>
            <person name="Howland T.J."/>
            <person name="Wei M.-H."/>
            <person name="Ibegwam C."/>
            <person name="Jalali M."/>
            <person name="Kalush F."/>
            <person name="Karpen G.H."/>
            <person name="Ke Z."/>
            <person name="Kennison J.A."/>
            <person name="Ketchum K.A."/>
            <person name="Kimmel B.E."/>
            <person name="Kodira C.D."/>
            <person name="Kraft C.L."/>
            <person name="Kravitz S."/>
            <person name="Kulp D."/>
            <person name="Lai Z."/>
            <person name="Lasko P."/>
            <person name="Lei Y."/>
            <person name="Levitsky A.A."/>
            <person name="Li J.H."/>
            <person name="Li Z."/>
            <person name="Liang Y."/>
            <person name="Lin X."/>
            <person name="Liu X."/>
            <person name="Mattei B."/>
            <person name="McIntosh T.C."/>
            <person name="McLeod M.P."/>
            <person name="McPherson D."/>
            <person name="Merkulov G."/>
            <person name="Milshina N.V."/>
            <person name="Mobarry C."/>
            <person name="Morris J."/>
            <person name="Moshrefi A."/>
            <person name="Mount S.M."/>
            <person name="Moy M."/>
            <person name="Murphy B."/>
            <person name="Murphy L."/>
            <person name="Muzny D.M."/>
            <person name="Nelson D.L."/>
            <person name="Nelson D.R."/>
            <person name="Nelson K.A."/>
            <person name="Nixon K."/>
            <person name="Nusskern D.R."/>
            <person name="Pacleb J.M."/>
            <person name="Palazzolo M."/>
            <person name="Pittman G.S."/>
            <person name="Pan S."/>
            <person name="Pollard J."/>
            <person name="Puri V."/>
            <person name="Reese M.G."/>
            <person name="Reinert K."/>
            <person name="Remington K."/>
            <person name="Saunders R.D.C."/>
            <person name="Scheeler F."/>
            <person name="Shen H."/>
            <person name="Shue B.C."/>
            <person name="Siden-Kiamos I."/>
            <person name="Simpson M."/>
            <person name="Skupski M.P."/>
            <person name="Smith T.J."/>
            <person name="Spier E."/>
            <person name="Spradling A.C."/>
            <person name="Stapleton M."/>
            <person name="Strong R."/>
            <person name="Sun E."/>
            <person name="Svirskas R."/>
            <person name="Tector C."/>
            <person name="Turner R."/>
            <person name="Venter E."/>
            <person name="Wang A.H."/>
            <person name="Wang X."/>
            <person name="Wang Z.-Y."/>
            <person name="Wassarman D.A."/>
            <person name="Weinstock G.M."/>
            <person name="Weissenbach J."/>
            <person name="Williams S.M."/>
            <person name="Woodage T."/>
            <person name="Worley K.C."/>
            <person name="Wu D."/>
            <person name="Yang S."/>
            <person name="Yao Q.A."/>
            <person name="Ye J."/>
            <person name="Yeh R.-F."/>
            <person name="Zaveri J.S."/>
            <person name="Zhan M."/>
            <person name="Zhang G."/>
            <person name="Zhao Q."/>
            <person name="Zheng L."/>
            <person name="Zheng X.H."/>
            <person name="Zhong F.N."/>
            <person name="Zhong W."/>
            <person name="Zhou X."/>
            <person name="Zhu S.C."/>
            <person name="Zhu X."/>
            <person name="Smith H.O."/>
            <person name="Gibbs R.A."/>
            <person name="Myers E.W."/>
            <person name="Rubin G.M."/>
            <person name="Venter J.C."/>
        </authorList>
    </citation>
    <scope>NUCLEOTIDE SEQUENCE [LARGE SCALE GENOMIC DNA]</scope>
    <source>
        <strain>Berkeley</strain>
    </source>
</reference>
<reference key="4">
    <citation type="journal article" date="2002" name="Genome Biol.">
        <title>Annotation of the Drosophila melanogaster euchromatic genome: a systematic review.</title>
        <authorList>
            <person name="Misra S."/>
            <person name="Crosby M.A."/>
            <person name="Mungall C.J."/>
            <person name="Matthews B.B."/>
            <person name="Campbell K.S."/>
            <person name="Hradecky P."/>
            <person name="Huang Y."/>
            <person name="Kaminker J.S."/>
            <person name="Millburn G.H."/>
            <person name="Prochnik S.E."/>
            <person name="Smith C.D."/>
            <person name="Tupy J.L."/>
            <person name="Whitfield E.J."/>
            <person name="Bayraktaroglu L."/>
            <person name="Berman B.P."/>
            <person name="Bettencourt B.R."/>
            <person name="Celniker S.E."/>
            <person name="de Grey A.D.N.J."/>
            <person name="Drysdale R.A."/>
            <person name="Harris N.L."/>
            <person name="Richter J."/>
            <person name="Russo S."/>
            <person name="Schroeder A.J."/>
            <person name="Shu S.Q."/>
            <person name="Stapleton M."/>
            <person name="Yamada C."/>
            <person name="Ashburner M."/>
            <person name="Gelbart W.M."/>
            <person name="Rubin G.M."/>
            <person name="Lewis S.E."/>
        </authorList>
    </citation>
    <scope>GENOME REANNOTATION</scope>
    <source>
        <strain>Berkeley</strain>
    </source>
</reference>
<reference key="5">
    <citation type="journal article" date="2002" name="Genome Biol.">
        <title>A Drosophila full-length cDNA resource.</title>
        <authorList>
            <person name="Stapleton M."/>
            <person name="Carlson J.W."/>
            <person name="Brokstein P."/>
            <person name="Yu C."/>
            <person name="Champe M."/>
            <person name="George R.A."/>
            <person name="Guarin H."/>
            <person name="Kronmiller B."/>
            <person name="Pacleb J.M."/>
            <person name="Park S."/>
            <person name="Wan K.H."/>
            <person name="Rubin G.M."/>
            <person name="Celniker S.E."/>
        </authorList>
    </citation>
    <scope>NUCLEOTIDE SEQUENCE [LARGE SCALE MRNA]</scope>
    <source>
        <strain>Berkeley</strain>
        <tissue>Ovary</tissue>
    </source>
</reference>
<reference key="6">
    <citation type="submission" date="2004-05" db="EMBL/GenBank/DDBJ databases">
        <authorList>
            <person name="Stapleton M."/>
            <person name="Carlson J.W."/>
            <person name="Chavez C."/>
            <person name="Frise E."/>
            <person name="George R.A."/>
            <person name="Pacleb J.M."/>
            <person name="Park S."/>
            <person name="Wan K.H."/>
            <person name="Yu C."/>
            <person name="Rubin G.M."/>
            <person name="Celniker S.E."/>
        </authorList>
    </citation>
    <scope>NUCLEOTIDE SEQUENCE [LARGE SCALE MRNA]</scope>
    <source>
        <strain>Berkeley</strain>
        <tissue>Embryo</tissue>
    </source>
</reference>
<reference key="7">
    <citation type="journal article" date="2002" name="J. Biol. Chem.">
        <title>Thioredoxin-2 but not thioredoxin-1 is a substrate of thioredoxin peroxidase-1 from Drosophila melanogaster: isolation and characterization of a second thioredoxin in D.melanogaster and evidence for distinct biological functions of Trx-1 and Trx-2.</title>
        <authorList>
            <person name="Bauer H."/>
            <person name="Kanzok S.M."/>
            <person name="Schirmer R.H."/>
        </authorList>
    </citation>
    <scope>FUNCTION</scope>
    <scope>DEVELOPMENTAL STAGE</scope>
</reference>
<reference key="8">
    <citation type="journal article" date="2008" name="J. Proteome Res.">
        <title>Phosphoproteome analysis of Drosophila melanogaster embryos.</title>
        <authorList>
            <person name="Zhai B."/>
            <person name="Villen J."/>
            <person name="Beausoleil S.A."/>
            <person name="Mintseris J."/>
            <person name="Gygi S.P."/>
        </authorList>
    </citation>
    <scope>PHOSPHORYLATION [LARGE SCALE ANALYSIS] AT THR-193 AND SER-194</scope>
    <scope>IDENTIFICATION BY MASS SPECTROMETRY</scope>
    <source>
        <tissue>Embryo</tissue>
    </source>
</reference>
<reference key="9">
    <citation type="journal article" date="2016" name="Cell. Mol. Life Sci.">
        <title>Urm1: an essential regulator of JNK signaling and oxidative stress in Drosophila melanogaster.</title>
        <authorList>
            <person name="Khoshnood B."/>
            <person name="Dacklin I."/>
            <person name="Grabbe C."/>
        </authorList>
    </citation>
    <scope>DISRUPTION PHENOTYPE</scope>
</reference>
<reference key="10">
    <citation type="journal article" date="2017" name="PLoS ONE">
        <title>A proteomics approach to identify targets of the ubiquitin-like molecule Urm1 in Drosophila melanogaster.</title>
        <authorList>
            <person name="Khoshnood B."/>
            <person name="Dacklin I."/>
            <person name="Grabbe C."/>
        </authorList>
    </citation>
    <scope>URMYLATION</scope>
    <scope>IDENTIFICATION BY MASS SPECTROMETRY</scope>
</reference>
<reference key="11">
    <citation type="journal article" date="2021" name="Antioxidants">
        <title>Hyperoxidation of Peroxiredoxins and Effects on Physiology of Drosophila.</title>
        <authorList>
            <person name="McGinnis A."/>
            <person name="Klichko V.I."/>
            <person name="Orr W.C."/>
            <person name="Radyuk S.N."/>
        </authorList>
    </citation>
    <scope>SUBUNIT</scope>
    <scope>TISSUE SPECIFICITY</scope>
</reference>
<organism>
    <name type="scientific">Drosophila melanogaster</name>
    <name type="common">Fruit fly</name>
    <dbReference type="NCBI Taxonomy" id="7227"/>
    <lineage>
        <taxon>Eukaryota</taxon>
        <taxon>Metazoa</taxon>
        <taxon>Ecdysozoa</taxon>
        <taxon>Arthropoda</taxon>
        <taxon>Hexapoda</taxon>
        <taxon>Insecta</taxon>
        <taxon>Pterygota</taxon>
        <taxon>Neoptera</taxon>
        <taxon>Endopterygota</taxon>
        <taxon>Diptera</taxon>
        <taxon>Brachycera</taxon>
        <taxon>Muscomorpha</taxon>
        <taxon>Ephydroidea</taxon>
        <taxon>Drosophilidae</taxon>
        <taxon>Drosophila</taxon>
        <taxon>Sophophora</taxon>
    </lineage>
</organism>
<protein>
    <recommendedName>
        <fullName evidence="14">Peroxiredoxin 2</fullName>
        <ecNumber evidence="4">1.11.1.24</ecNumber>
    </recommendedName>
    <alternativeName>
        <fullName evidence="13">Cytosolic thioredoxin peroxidase 1</fullName>
    </alternativeName>
    <alternativeName>
        <fullName evidence="13">Thioredoxin peroxidase 1</fullName>
    </alternativeName>
    <alternativeName>
        <fullName evidence="13">Thioredoxin-dependent peroxide reductase 1</fullName>
    </alternativeName>
    <alternativeName>
        <fullName evidence="13">Thioredoxin-dependent peroxiredoxin 2</fullName>
    </alternativeName>
</protein>
<dbReference type="EC" id="1.11.1.24" evidence="4"/>
<dbReference type="EMBL" id="AF167098">
    <property type="protein sequence ID" value="AAF42985.1"/>
    <property type="molecule type" value="mRNA"/>
</dbReference>
<dbReference type="EMBL" id="AF321615">
    <property type="protein sequence ID" value="AAK06770.1"/>
    <property type="molecule type" value="mRNA"/>
</dbReference>
<dbReference type="EMBL" id="AF321616">
    <property type="protein sequence ID" value="AAK06771.1"/>
    <property type="molecule type" value="mRNA"/>
</dbReference>
<dbReference type="EMBL" id="AE014298">
    <property type="protein sequence ID" value="AAF48253.1"/>
    <property type="molecule type" value="Genomic_DNA"/>
</dbReference>
<dbReference type="EMBL" id="AY070534">
    <property type="protein sequence ID" value="AAL48005.1"/>
    <property type="molecule type" value="mRNA"/>
</dbReference>
<dbReference type="EMBL" id="BT014630">
    <property type="protein sequence ID" value="AAT27254.1"/>
    <property type="molecule type" value="mRNA"/>
</dbReference>
<dbReference type="RefSeq" id="NP_001285202.1">
    <property type="nucleotide sequence ID" value="NM_001298273.1"/>
</dbReference>
<dbReference type="RefSeq" id="NP_001285203.1">
    <property type="nucleotide sequence ID" value="NM_001298274.1"/>
</dbReference>
<dbReference type="RefSeq" id="NP_001285204.1">
    <property type="nucleotide sequence ID" value="NM_001298275.1"/>
</dbReference>
<dbReference type="RefSeq" id="NP_477510.1">
    <property type="nucleotide sequence ID" value="NM_058162.3"/>
</dbReference>
<dbReference type="RefSeq" id="NP_727689.1">
    <property type="nucleotide sequence ID" value="NM_167359.2"/>
</dbReference>
<dbReference type="SMR" id="Q9V3P0"/>
<dbReference type="BioGRID" id="72802">
    <property type="interactions" value="30"/>
</dbReference>
<dbReference type="DIP" id="DIP-17916N"/>
<dbReference type="FunCoup" id="Q9V3P0">
    <property type="interactions" value="1070"/>
</dbReference>
<dbReference type="IntAct" id="Q9V3P0">
    <property type="interactions" value="16"/>
</dbReference>
<dbReference type="MINT" id="Q9V3P0"/>
<dbReference type="STRING" id="7227.FBpp0308757"/>
<dbReference type="iPTMnet" id="Q9V3P0"/>
<dbReference type="PaxDb" id="7227-FBpp0073594"/>
<dbReference type="DNASU" id="53578"/>
<dbReference type="EnsemblMetazoa" id="FBtr0073763">
    <property type="protein sequence ID" value="FBpp0073594"/>
    <property type="gene ID" value="FBgn0040309"/>
</dbReference>
<dbReference type="EnsemblMetazoa" id="FBtr0073764">
    <property type="protein sequence ID" value="FBpp0073595"/>
    <property type="gene ID" value="FBgn0040309"/>
</dbReference>
<dbReference type="EnsemblMetazoa" id="FBtr0339699">
    <property type="protein sequence ID" value="FBpp0308756"/>
    <property type="gene ID" value="FBgn0040309"/>
</dbReference>
<dbReference type="EnsemblMetazoa" id="FBtr0339700">
    <property type="protein sequence ID" value="FBpp0308757"/>
    <property type="gene ID" value="FBgn0040309"/>
</dbReference>
<dbReference type="EnsemblMetazoa" id="FBtr0345161">
    <property type="protein sequence ID" value="FBpp0311371"/>
    <property type="gene ID" value="FBgn0040309"/>
</dbReference>
<dbReference type="GeneID" id="53578"/>
<dbReference type="KEGG" id="dme:Dmel_CG1633"/>
<dbReference type="AGR" id="FB:FBgn0040309"/>
<dbReference type="CTD" id="53578"/>
<dbReference type="FlyBase" id="FBgn0040309">
    <property type="gene designation" value="Prx2"/>
</dbReference>
<dbReference type="VEuPathDB" id="VectorBase:FBgn0040309"/>
<dbReference type="eggNOG" id="KOG0852">
    <property type="taxonomic scope" value="Eukaryota"/>
</dbReference>
<dbReference type="HOGENOM" id="CLU_042529_21_1_1"/>
<dbReference type="InParanoid" id="Q9V3P0"/>
<dbReference type="OMA" id="HYAFGDV"/>
<dbReference type="OrthoDB" id="185659at2759"/>
<dbReference type="PhylomeDB" id="Q9V3P0"/>
<dbReference type="Reactome" id="R-DME-3299685">
    <property type="pathway name" value="Detoxification of Reactive Oxygen Species"/>
</dbReference>
<dbReference type="Reactome" id="R-DME-5628897">
    <property type="pathway name" value="TP53 Regulates Metabolic Genes"/>
</dbReference>
<dbReference type="Reactome" id="R-DME-9818027">
    <property type="pathway name" value="NFE2L2 regulating anti-oxidant/detoxification enzymes"/>
</dbReference>
<dbReference type="SignaLink" id="Q9V3P0"/>
<dbReference type="BioGRID-ORCS" id="53578">
    <property type="hits" value="0 hits in 3 CRISPR screens"/>
</dbReference>
<dbReference type="GenomeRNAi" id="53578"/>
<dbReference type="PRO" id="PR:Q9V3P0"/>
<dbReference type="Proteomes" id="UP000000803">
    <property type="component" value="Chromosome X"/>
</dbReference>
<dbReference type="Bgee" id="FBgn0040309">
    <property type="expression patterns" value="Expressed in adult middle midgut class I enteroendocrine cell in adult midgut (Drosophila) and 276 other cell types or tissues"/>
</dbReference>
<dbReference type="ExpressionAtlas" id="Q9V3P0">
    <property type="expression patterns" value="baseline and differential"/>
</dbReference>
<dbReference type="GO" id="GO:0005829">
    <property type="term" value="C:cytosol"/>
    <property type="evidence" value="ECO:0000314"/>
    <property type="project" value="UniProtKB"/>
</dbReference>
<dbReference type="GO" id="GO:0051920">
    <property type="term" value="F:peroxiredoxin activity"/>
    <property type="evidence" value="ECO:0000314"/>
    <property type="project" value="FlyBase"/>
</dbReference>
<dbReference type="GO" id="GO:0008379">
    <property type="term" value="F:thioredoxin peroxidase activity"/>
    <property type="evidence" value="ECO:0000318"/>
    <property type="project" value="GO_Central"/>
</dbReference>
<dbReference type="GO" id="GO:0140824">
    <property type="term" value="F:thioredoxin-dependent peroxiredoxin activity"/>
    <property type="evidence" value="ECO:0000314"/>
    <property type="project" value="UniProtKB"/>
</dbReference>
<dbReference type="GO" id="GO:0007155">
    <property type="term" value="P:cell adhesion"/>
    <property type="evidence" value="ECO:0000315"/>
    <property type="project" value="FlyBase"/>
</dbReference>
<dbReference type="GO" id="GO:0045454">
    <property type="term" value="P:cell redox homeostasis"/>
    <property type="evidence" value="ECO:0000314"/>
    <property type="project" value="UniProtKB"/>
</dbReference>
<dbReference type="GO" id="GO:0008340">
    <property type="term" value="P:determination of adult lifespan"/>
    <property type="evidence" value="ECO:0000315"/>
    <property type="project" value="FlyBase"/>
</dbReference>
<dbReference type="GO" id="GO:0007281">
    <property type="term" value="P:germ cell development"/>
    <property type="evidence" value="ECO:0000315"/>
    <property type="project" value="FlyBase"/>
</dbReference>
<dbReference type="GO" id="GO:0008354">
    <property type="term" value="P:germ cell migration"/>
    <property type="evidence" value="ECO:0000315"/>
    <property type="project" value="FlyBase"/>
</dbReference>
<dbReference type="GO" id="GO:0042744">
    <property type="term" value="P:hydrogen peroxide catabolic process"/>
    <property type="evidence" value="ECO:0000314"/>
    <property type="project" value="FlyBase"/>
</dbReference>
<dbReference type="GO" id="GO:0019430">
    <property type="term" value="P:removal of superoxide radicals"/>
    <property type="evidence" value="ECO:0000318"/>
    <property type="project" value="GO_Central"/>
</dbReference>
<dbReference type="GO" id="GO:0006979">
    <property type="term" value="P:response to oxidative stress"/>
    <property type="evidence" value="ECO:0000315"/>
    <property type="project" value="FlyBase"/>
</dbReference>
<dbReference type="GO" id="GO:0042594">
    <property type="term" value="P:response to starvation"/>
    <property type="evidence" value="ECO:0000315"/>
    <property type="project" value="FlyBase"/>
</dbReference>
<dbReference type="CDD" id="cd03015">
    <property type="entry name" value="PRX_Typ2cys"/>
    <property type="match status" value="1"/>
</dbReference>
<dbReference type="FunFam" id="3.40.30.10:FF:000003">
    <property type="entry name" value="Peroxiredoxin 1"/>
    <property type="match status" value="1"/>
</dbReference>
<dbReference type="Gene3D" id="3.40.30.10">
    <property type="entry name" value="Glutaredoxin"/>
    <property type="match status" value="1"/>
</dbReference>
<dbReference type="InterPro" id="IPR000866">
    <property type="entry name" value="AhpC/TSA"/>
</dbReference>
<dbReference type="InterPro" id="IPR050217">
    <property type="entry name" value="Peroxiredoxin"/>
</dbReference>
<dbReference type="InterPro" id="IPR024706">
    <property type="entry name" value="Peroxiredoxin_AhpC-typ"/>
</dbReference>
<dbReference type="InterPro" id="IPR019479">
    <property type="entry name" value="Peroxiredoxin_C"/>
</dbReference>
<dbReference type="InterPro" id="IPR036249">
    <property type="entry name" value="Thioredoxin-like_sf"/>
</dbReference>
<dbReference type="InterPro" id="IPR013766">
    <property type="entry name" value="Thioredoxin_domain"/>
</dbReference>
<dbReference type="PANTHER" id="PTHR10681:SF163">
    <property type="entry name" value="AT16346P-RELATED"/>
    <property type="match status" value="1"/>
</dbReference>
<dbReference type="PANTHER" id="PTHR10681">
    <property type="entry name" value="THIOREDOXIN PEROXIDASE"/>
    <property type="match status" value="1"/>
</dbReference>
<dbReference type="Pfam" id="PF10417">
    <property type="entry name" value="1-cysPrx_C"/>
    <property type="match status" value="1"/>
</dbReference>
<dbReference type="Pfam" id="PF00578">
    <property type="entry name" value="AhpC-TSA"/>
    <property type="match status" value="1"/>
</dbReference>
<dbReference type="PIRSF" id="PIRSF000239">
    <property type="entry name" value="AHPC"/>
    <property type="match status" value="1"/>
</dbReference>
<dbReference type="SUPFAM" id="SSF52833">
    <property type="entry name" value="Thioredoxin-like"/>
    <property type="match status" value="1"/>
</dbReference>
<dbReference type="PROSITE" id="PS51352">
    <property type="entry name" value="THIOREDOXIN_2"/>
    <property type="match status" value="1"/>
</dbReference>
<proteinExistence type="evidence at protein level"/>
<name>PRDX2_DROME</name>
<accession>Q9V3P0</accession>
<accession>Q0KHT0</accession>
<evidence type="ECO:0000250" key="1">
    <source>
        <dbReference type="UniProtKB" id="P0CB50"/>
    </source>
</evidence>
<evidence type="ECO:0000250" key="2">
    <source>
        <dbReference type="UniProtKB" id="Q06830"/>
    </source>
</evidence>
<evidence type="ECO:0000255" key="3">
    <source>
        <dbReference type="PROSITE-ProRule" id="PRU00691"/>
    </source>
</evidence>
<evidence type="ECO:0000269" key="4">
    <source>
    </source>
</evidence>
<evidence type="ECO:0000269" key="5">
    <source>
    </source>
</evidence>
<evidence type="ECO:0000269" key="6">
    <source>
    </source>
</evidence>
<evidence type="ECO:0000269" key="7">
    <source>
    </source>
</evidence>
<evidence type="ECO:0000269" key="8">
    <source>
    </source>
</evidence>
<evidence type="ECO:0000269" key="9">
    <source>
    </source>
</evidence>
<evidence type="ECO:0000303" key="10">
    <source>
    </source>
</evidence>
<evidence type="ECO:0000303" key="11">
    <source>
    </source>
</evidence>
<evidence type="ECO:0000303" key="12">
    <source>
    </source>
</evidence>
<evidence type="ECO:0000305" key="13"/>
<evidence type="ECO:0000312" key="14">
    <source>
        <dbReference type="FlyBase" id="FBgn0040309"/>
    </source>
</evidence>
<comment type="function">
    <text evidence="1 2">Thiol-specific peroxidase that catalyzes the reduction of hydrogen peroxide and organic hydroperoxides to water and alcohols, respectively. Plays a role in cell protection against oxidative stress by detoxifying peroxides and as sensor of hydrogen peroxide-mediated signaling events. Might participate in the signaling cascades of growth factors and tumor necrosis factor-alpha by regulating the intracellular concentrations of H(2)O(2) (By similarity). Reduces an intramolecular disulfide bond in GDPD5 that gates the ability to GDPD5 to drive postmitotic motor neuron differentiation (By similarity).</text>
</comment>
<comment type="catalytic activity">
    <reaction evidence="4">
        <text>a hydroperoxide + [thioredoxin]-dithiol = an alcohol + [thioredoxin]-disulfide + H2O</text>
        <dbReference type="Rhea" id="RHEA:62620"/>
        <dbReference type="Rhea" id="RHEA-COMP:10698"/>
        <dbReference type="Rhea" id="RHEA-COMP:10700"/>
        <dbReference type="ChEBI" id="CHEBI:15377"/>
        <dbReference type="ChEBI" id="CHEBI:29950"/>
        <dbReference type="ChEBI" id="CHEBI:30879"/>
        <dbReference type="ChEBI" id="CHEBI:35924"/>
        <dbReference type="ChEBI" id="CHEBI:50058"/>
        <dbReference type="EC" id="1.11.1.24"/>
    </reaction>
</comment>
<comment type="subunit">
    <text evidence="2 9">Homodimer; disulfide-linked, upon oxidation (PubMed:33920774). 5 homodimers assemble to form a ring-like decamer (By similarity). Also exists as a monomer (PubMed:33920774).</text>
</comment>
<comment type="interaction">
    <interactant intactId="EBI-82319">
        <id>Q9V3P0</id>
    </interactant>
    <interactant intactId="EBI-88468">
        <id>P11956</id>
        <label>MtnB</label>
    </interactant>
    <organismsDiffer>false</organismsDiffer>
    <experiments>2</experiments>
</comment>
<comment type="subcellular location">
    <subcellularLocation>
        <location evidence="4">Cytoplasm</location>
    </subcellularLocation>
</comment>
<comment type="tissue specificity">
    <text evidence="9">Detected in the head and body (at protein level).</text>
</comment>
<comment type="developmental stage">
    <text evidence="4 5">Highly expressed during embryogenesis, weakly expressed during larval stages.</text>
</comment>
<comment type="PTM">
    <text evidence="2">The enzyme can be inactivated by further oxidation of the cysteine sulfenic acid (C(P)-SOH) to sulphinic acid (C(P)-SO2H) instead of its condensation to a disulfide bond. It can be reactivated by forming a transient disulfide bond with sulfiredoxin SRXN1, which reduces the cysteine sulfinic acid in an ATP- and Mg-dependent manner.</text>
</comment>
<comment type="PTM">
    <text evidence="8">Conjugated to URM1, a ubiquitin-like protein.</text>
</comment>
<comment type="disruption phenotype">
    <text evidence="7">Results in reduced resistance to oxidative stress (PubMed:26715182). Simultaneous knockout of Urm1 restores normal sensitivity to oxidative stress (PubMed:26715182).</text>
</comment>
<comment type="miscellaneous">
    <text evidence="2 5">The active site is a conserved redox-active cysteine residue, the peroxidatic cysteine (C(P)), which makes the nucleophilic attack on the peroxide substrate. The peroxide oxidizes the C(P)-SH to cysteine sulfenic acid (C(P)-SOH), which then reacts with another cysteine residue, the resolving cysteine (C(R)), to form a disulfide bridge. The disulfide is subsequently reduced by an appropriate electron donor to complete the catalytic cycle. In this typical 2-Cys peroxiredoxin, C(R) is provided by the other dimeric subunit to form an intersubunit disulfide. The disulfide is subsequently reduced by thioredoxin (By similarity). As a reducing substrate, thioredoxin 2 is preferred over thioredoxin 1 (PubMed:11877442).</text>
</comment>
<comment type="similarity">
    <text evidence="13">Belongs to the peroxiredoxin family. AhpC/Prx1 subfamily.</text>
</comment>
<gene>
    <name evidence="14" type="primary">Prx2</name>
    <name evidence="10" type="synonym">DPx-4783</name>
    <name evidence="12" type="synonym">Jafrac1</name>
    <name evidence="11" type="synonym">TPX-1</name>
    <name evidence="14" type="ORF">CG1633</name>
</gene>
<keyword id="KW-0049">Antioxidant</keyword>
<keyword id="KW-0963">Cytoplasm</keyword>
<keyword id="KW-1015">Disulfide bond</keyword>
<keyword id="KW-0560">Oxidoreductase</keyword>
<keyword id="KW-0575">Peroxidase</keyword>
<keyword id="KW-0597">Phosphoprotein</keyword>
<keyword id="KW-0676">Redox-active center</keyword>
<keyword id="KW-1185">Reference proteome</keyword>
<keyword id="KW-0832">Ubl conjugation</keyword>
<feature type="chain" id="PRO_0000135085" description="Peroxiredoxin 2">
    <location>
        <begin position="1"/>
        <end position="194"/>
    </location>
</feature>
<feature type="domain" description="Thioredoxin" evidence="3">
    <location>
        <begin position="2"/>
        <end position="160"/>
    </location>
</feature>
<feature type="active site" description="Cysteine sulfenic acid (-SOH) intermediate" evidence="2">
    <location>
        <position position="47"/>
    </location>
</feature>
<feature type="modified residue" description="Phosphothreonine" evidence="6">
    <location>
        <position position="193"/>
    </location>
</feature>
<feature type="modified residue" description="Phosphoserine" evidence="6">
    <location>
        <position position="194"/>
    </location>
</feature>
<feature type="disulfide bond" description="Interchain (with C-168); in linked form" evidence="2">
    <location>
        <position position="47"/>
    </location>
</feature>
<feature type="disulfide bond" description="Interchain (with C-47); in linked form" evidence="2">
    <location>
        <position position="168"/>
    </location>
</feature>
<sequence length="194" mass="21738">MPQLQKPAPAFAGTAVVNGVFKDIKLSDYKGKYLVLFFYPLDFTFVCPTEIIAFSESAAEFRKINCEVIGCSTDSQFTHLAWINTPRKQGGLGSMDIPLLADKSMKVARDYGVLDEETGIPFRGLFIIDDKQNLRQITVNDLPVGRSVEETLRLVQAFQYTDKYGEVCPANWKPGQKTMVADPTKSKEYFETTS</sequence>